<feature type="chain" id="PRO_0000299799" description="Putative uncharacterized protein YPL044C">
    <location>
        <begin position="1"/>
        <end position="182"/>
    </location>
</feature>
<feature type="transmembrane region" description="Helical" evidence="1">
    <location>
        <begin position="76"/>
        <end position="96"/>
    </location>
</feature>
<feature type="transmembrane region" description="Helical" evidence="1">
    <location>
        <begin position="114"/>
        <end position="130"/>
    </location>
</feature>
<organism>
    <name type="scientific">Saccharomyces cerevisiae (strain ATCC 204508 / S288c)</name>
    <name type="common">Baker's yeast</name>
    <dbReference type="NCBI Taxonomy" id="559292"/>
    <lineage>
        <taxon>Eukaryota</taxon>
        <taxon>Fungi</taxon>
        <taxon>Dikarya</taxon>
        <taxon>Ascomycota</taxon>
        <taxon>Saccharomycotina</taxon>
        <taxon>Saccharomycetes</taxon>
        <taxon>Saccharomycetales</taxon>
        <taxon>Saccharomycetaceae</taxon>
        <taxon>Saccharomyces</taxon>
    </lineage>
</organism>
<gene>
    <name type="ordered locus">YPL044C</name>
</gene>
<comment type="subcellular location">
    <subcellularLocation>
        <location evidence="2">Membrane</location>
        <topology evidence="2">Multi-pass membrane protein</topology>
    </subcellularLocation>
</comment>
<comment type="miscellaneous">
    <text evidence="2">Almost completely overlaps NOP4.</text>
</comment>
<comment type="caution">
    <text evidence="3">Product of a dubious gene prediction unlikely to encode a functional protein. Because of that it is not part of the S.cerevisiae S288c complete/reference proteome set.</text>
</comment>
<sequence length="182" mass="19682">MVASTTVPYLPKIFFNLTGSRQLHGIFLIINFGLPFSMESSPSASSSSSLFWPVIFSDDSGVLFSTTSDVFFERSLLLAMSTLKICPLNLVFLALARASFVSSSTAKLTNPKPLDLLFVSLTTTACLIGAKLEKKSASCSSVTSWGIDLTNKVFISRPSSFCFETLLEGTSTFSIVSSISLW</sequence>
<accession>O13520</accession>
<keyword id="KW-0472">Membrane</keyword>
<keyword id="KW-0812">Transmembrane</keyword>
<keyword id="KW-1133">Transmembrane helix</keyword>
<proteinExistence type="uncertain"/>
<name>YP044_YEAST</name>
<protein>
    <recommendedName>
        <fullName>Putative uncharacterized protein YPL044C</fullName>
    </recommendedName>
</protein>
<reference key="1">
    <citation type="journal article" date="1997" name="Nature">
        <title>The nucleotide sequence of Saccharomyces cerevisiae chromosome XVI.</title>
        <authorList>
            <person name="Bussey H."/>
            <person name="Storms R.K."/>
            <person name="Ahmed A."/>
            <person name="Albermann K."/>
            <person name="Allen E."/>
            <person name="Ansorge W."/>
            <person name="Araujo R."/>
            <person name="Aparicio A."/>
            <person name="Barrell B.G."/>
            <person name="Badcock K."/>
            <person name="Benes V."/>
            <person name="Botstein D."/>
            <person name="Bowman S."/>
            <person name="Brueckner M."/>
            <person name="Carpenter J."/>
            <person name="Cherry J.M."/>
            <person name="Chung E."/>
            <person name="Churcher C.M."/>
            <person name="Coster F."/>
            <person name="Davis K."/>
            <person name="Davis R.W."/>
            <person name="Dietrich F.S."/>
            <person name="Delius H."/>
            <person name="DiPaolo T."/>
            <person name="Dubois E."/>
            <person name="Duesterhoeft A."/>
            <person name="Duncan M."/>
            <person name="Floeth M."/>
            <person name="Fortin N."/>
            <person name="Friesen J.D."/>
            <person name="Fritz C."/>
            <person name="Goffeau A."/>
            <person name="Hall J."/>
            <person name="Hebling U."/>
            <person name="Heumann K."/>
            <person name="Hilbert H."/>
            <person name="Hillier L.W."/>
            <person name="Hunicke-Smith S."/>
            <person name="Hyman R.W."/>
            <person name="Johnston M."/>
            <person name="Kalman S."/>
            <person name="Kleine K."/>
            <person name="Komp C."/>
            <person name="Kurdi O."/>
            <person name="Lashkari D."/>
            <person name="Lew H."/>
            <person name="Lin A."/>
            <person name="Lin D."/>
            <person name="Louis E.J."/>
            <person name="Marathe R."/>
            <person name="Messenguy F."/>
            <person name="Mewes H.-W."/>
            <person name="Mirtipati S."/>
            <person name="Moestl D."/>
            <person name="Mueller-Auer S."/>
            <person name="Namath A."/>
            <person name="Nentwich U."/>
            <person name="Oefner P."/>
            <person name="Pearson D."/>
            <person name="Petel F.X."/>
            <person name="Pohl T.M."/>
            <person name="Purnelle B."/>
            <person name="Rajandream M.A."/>
            <person name="Rechmann S."/>
            <person name="Rieger M."/>
            <person name="Riles L."/>
            <person name="Roberts D."/>
            <person name="Schaefer M."/>
            <person name="Scharfe M."/>
            <person name="Scherens B."/>
            <person name="Schramm S."/>
            <person name="Schroeder M."/>
            <person name="Sdicu A.-M."/>
            <person name="Tettelin H."/>
            <person name="Urrestarazu L.A."/>
            <person name="Ushinsky S."/>
            <person name="Vierendeels F."/>
            <person name="Vissers S."/>
            <person name="Voss H."/>
            <person name="Walsh S.V."/>
            <person name="Wambutt R."/>
            <person name="Wang Y."/>
            <person name="Wedler E."/>
            <person name="Wedler H."/>
            <person name="Winnett E."/>
            <person name="Zhong W.-W."/>
            <person name="Zollner A."/>
            <person name="Vo D.H."/>
            <person name="Hani J."/>
        </authorList>
    </citation>
    <scope>NUCLEOTIDE SEQUENCE [LARGE SCALE GENOMIC DNA]</scope>
    <source>
        <strain>ATCC 204508 / S288c</strain>
    </source>
</reference>
<reference key="2">
    <citation type="journal article" date="2014" name="G3 (Bethesda)">
        <title>The reference genome sequence of Saccharomyces cerevisiae: Then and now.</title>
        <authorList>
            <person name="Engel S.R."/>
            <person name="Dietrich F.S."/>
            <person name="Fisk D.G."/>
            <person name="Binkley G."/>
            <person name="Balakrishnan R."/>
            <person name="Costanzo M.C."/>
            <person name="Dwight S.S."/>
            <person name="Hitz B.C."/>
            <person name="Karra K."/>
            <person name="Nash R.S."/>
            <person name="Weng S."/>
            <person name="Wong E.D."/>
            <person name="Lloyd P."/>
            <person name="Skrzypek M.S."/>
            <person name="Miyasato S.R."/>
            <person name="Simison M."/>
            <person name="Cherry J.M."/>
        </authorList>
    </citation>
    <scope>GENOME REANNOTATION</scope>
    <source>
        <strain>ATCC 204508 / S288c</strain>
    </source>
</reference>
<evidence type="ECO:0000255" key="1"/>
<evidence type="ECO:0000305" key="2"/>
<evidence type="ECO:0000305" key="3">
    <source>
    </source>
</evidence>
<dbReference type="EMBL" id="U44030">
    <property type="protein sequence ID" value="AAB68190.1"/>
    <property type="molecule type" value="Genomic_DNA"/>
</dbReference>
<dbReference type="PIR" id="S69469">
    <property type="entry name" value="S69469"/>
</dbReference>
<dbReference type="IntAct" id="O13520">
    <property type="interactions" value="1"/>
</dbReference>
<dbReference type="PaxDb" id="4932-YPL044C"/>
<dbReference type="EnsemblFungi" id="YPL044C_mRNA">
    <property type="protein sequence ID" value="YPL044C"/>
    <property type="gene ID" value="YPL044C"/>
</dbReference>
<dbReference type="AGR" id="SGD:S000005965"/>
<dbReference type="SGD" id="S000005965">
    <property type="gene designation" value="YPL044C"/>
</dbReference>
<dbReference type="HOGENOM" id="CLU_1483126_0_0_1"/>
<dbReference type="GO" id="GO:0016020">
    <property type="term" value="C:membrane"/>
    <property type="evidence" value="ECO:0007669"/>
    <property type="project" value="UniProtKB-SubCell"/>
</dbReference>